<dbReference type="EMBL" id="AF044926">
    <property type="protein sequence ID" value="AAC09301.1"/>
    <property type="molecule type" value="Genomic_DNA"/>
</dbReference>
<dbReference type="EMBL" id="CH940649">
    <property type="protein sequence ID" value="EDW63699.1"/>
    <property type="molecule type" value="Genomic_DNA"/>
</dbReference>
<dbReference type="RefSeq" id="XP_002051544.1">
    <property type="nucleotide sequence ID" value="XM_002051508.2"/>
</dbReference>
<dbReference type="SMR" id="O61493"/>
<dbReference type="FunCoup" id="O61493">
    <property type="interactions" value="509"/>
</dbReference>
<dbReference type="STRING" id="7244.O61493"/>
<dbReference type="GeneID" id="6628469"/>
<dbReference type="KEGG" id="dvi:6628469"/>
<dbReference type="CTD" id="35169"/>
<dbReference type="eggNOG" id="ENOG502QQM8">
    <property type="taxonomic scope" value="Eukaryota"/>
</dbReference>
<dbReference type="InParanoid" id="O61493"/>
<dbReference type="OrthoDB" id="49395at2759"/>
<dbReference type="Proteomes" id="UP000008792">
    <property type="component" value="Unassembled WGS sequence"/>
</dbReference>
<dbReference type="GO" id="GO:0005813">
    <property type="term" value="C:centrosome"/>
    <property type="evidence" value="ECO:0007669"/>
    <property type="project" value="TreeGrafter"/>
</dbReference>
<dbReference type="GO" id="GO:0005768">
    <property type="term" value="C:endosome"/>
    <property type="evidence" value="ECO:0000250"/>
    <property type="project" value="UniProtKB"/>
</dbReference>
<dbReference type="GO" id="GO:0005874">
    <property type="term" value="C:microtubule"/>
    <property type="evidence" value="ECO:0007669"/>
    <property type="project" value="UniProtKB-KW"/>
</dbReference>
<dbReference type="GO" id="GO:0045202">
    <property type="term" value="C:synapse"/>
    <property type="evidence" value="ECO:0007669"/>
    <property type="project" value="UniProtKB-SubCell"/>
</dbReference>
<dbReference type="GO" id="GO:0051959">
    <property type="term" value="F:dynein light intermediate chain binding"/>
    <property type="evidence" value="ECO:0007669"/>
    <property type="project" value="TreeGrafter"/>
</dbReference>
<dbReference type="GO" id="GO:0008017">
    <property type="term" value="F:microtubule binding"/>
    <property type="evidence" value="ECO:0000250"/>
    <property type="project" value="UniProtKB"/>
</dbReference>
<dbReference type="GO" id="GO:0031122">
    <property type="term" value="P:cytoplasmic microtubule organization"/>
    <property type="evidence" value="ECO:0007669"/>
    <property type="project" value="InterPro"/>
</dbReference>
<dbReference type="GO" id="GO:0030705">
    <property type="term" value="P:cytoskeleton-dependent intracellular transport"/>
    <property type="evidence" value="ECO:0000250"/>
    <property type="project" value="UniProtKB"/>
</dbReference>
<dbReference type="GO" id="GO:0006897">
    <property type="term" value="P:endocytosis"/>
    <property type="evidence" value="ECO:0000250"/>
    <property type="project" value="UniProtKB"/>
</dbReference>
<dbReference type="CDD" id="cd22222">
    <property type="entry name" value="HkD_Hook"/>
    <property type="match status" value="1"/>
</dbReference>
<dbReference type="FunFam" id="1.10.418.10:FF:000024">
    <property type="entry name" value="Hook homolog 3 (Drosophila)"/>
    <property type="match status" value="1"/>
</dbReference>
<dbReference type="Gene3D" id="1.10.418.10">
    <property type="entry name" value="Calponin-like domain"/>
    <property type="match status" value="1"/>
</dbReference>
<dbReference type="InterPro" id="IPR001715">
    <property type="entry name" value="CH_dom"/>
</dbReference>
<dbReference type="InterPro" id="IPR036872">
    <property type="entry name" value="CH_dom_sf"/>
</dbReference>
<dbReference type="InterPro" id="IPR008636">
    <property type="entry name" value="Hook_C"/>
</dbReference>
<dbReference type="InterPro" id="IPR043936">
    <property type="entry name" value="HOOK_N"/>
</dbReference>
<dbReference type="PANTHER" id="PTHR18947">
    <property type="entry name" value="HOOK PROTEINS"/>
    <property type="match status" value="1"/>
</dbReference>
<dbReference type="PANTHER" id="PTHR18947:SF39">
    <property type="entry name" value="PROTEIN HOOK"/>
    <property type="match status" value="1"/>
</dbReference>
<dbReference type="Pfam" id="PF05622">
    <property type="entry name" value="HOOK"/>
    <property type="match status" value="1"/>
</dbReference>
<dbReference type="Pfam" id="PF19047">
    <property type="entry name" value="HOOK_N"/>
    <property type="match status" value="1"/>
</dbReference>
<dbReference type="SUPFAM" id="SSF116907">
    <property type="entry name" value="Hook domain"/>
    <property type="match status" value="1"/>
</dbReference>
<dbReference type="PROSITE" id="PS50021">
    <property type="entry name" value="CH"/>
    <property type="match status" value="1"/>
</dbReference>
<gene>
    <name evidence="2" type="primary">hook</name>
    <name evidence="2" type="synonym">hk</name>
    <name type="ORF">GJ11581</name>
</gene>
<evidence type="ECO:0000250" key="1"/>
<evidence type="ECO:0000250" key="2">
    <source>
        <dbReference type="UniProtKB" id="Q24185"/>
    </source>
</evidence>
<evidence type="ECO:0000255" key="3"/>
<evidence type="ECO:0000255" key="4">
    <source>
        <dbReference type="PROSITE-ProRule" id="PRU00044"/>
    </source>
</evidence>
<evidence type="ECO:0000305" key="5"/>
<feature type="chain" id="PRO_0000219200" description="Protein hook">
    <location>
        <begin position="1"/>
        <end position="678"/>
    </location>
</feature>
<feature type="domain" description="Calponin-homology (CH)" evidence="4">
    <location>
        <begin position="5"/>
        <end position="123"/>
    </location>
</feature>
<feature type="region of interest" description="Interaction with microtubules" evidence="1">
    <location>
        <begin position="1"/>
        <end position="155"/>
    </location>
</feature>
<feature type="coiled-coil region" evidence="3">
    <location>
        <begin position="135"/>
        <end position="435"/>
    </location>
</feature>
<feature type="coiled-coil region" evidence="3">
    <location>
        <begin position="479"/>
        <end position="589"/>
    </location>
</feature>
<organism>
    <name type="scientific">Drosophila virilis</name>
    <name type="common">Fruit fly</name>
    <dbReference type="NCBI Taxonomy" id="7244"/>
    <lineage>
        <taxon>Eukaryota</taxon>
        <taxon>Metazoa</taxon>
        <taxon>Ecdysozoa</taxon>
        <taxon>Arthropoda</taxon>
        <taxon>Hexapoda</taxon>
        <taxon>Insecta</taxon>
        <taxon>Pterygota</taxon>
        <taxon>Neoptera</taxon>
        <taxon>Endopterygota</taxon>
        <taxon>Diptera</taxon>
        <taxon>Brachycera</taxon>
        <taxon>Muscomorpha</taxon>
        <taxon>Ephydroidea</taxon>
        <taxon>Drosophilidae</taxon>
        <taxon>Drosophila</taxon>
    </lineage>
</organism>
<proteinExistence type="inferred from homology"/>
<keyword id="KW-0175">Coiled coil</keyword>
<keyword id="KW-0963">Cytoplasm</keyword>
<keyword id="KW-0206">Cytoskeleton</keyword>
<keyword id="KW-0217">Developmental protein</keyword>
<keyword id="KW-0254">Endocytosis</keyword>
<keyword id="KW-0967">Endosome</keyword>
<keyword id="KW-0493">Microtubule</keyword>
<keyword id="KW-1185">Reference proteome</keyword>
<keyword id="KW-0770">Synapse</keyword>
<reference key="1">
    <citation type="journal article" date="1999" name="Genetics">
        <title>Genetic analysis of hook, a gene required for endocytic trafficking in Drosophila.</title>
        <authorList>
            <person name="Kraemer H."/>
            <person name="Phistry M."/>
        </authorList>
    </citation>
    <scope>NUCLEOTIDE SEQUENCE [GENOMIC DNA]</scope>
</reference>
<reference key="2">
    <citation type="journal article" date="2007" name="Nature">
        <title>Evolution of genes and genomes on the Drosophila phylogeny.</title>
        <authorList>
            <consortium name="Drosophila 12 genomes consortium"/>
        </authorList>
    </citation>
    <scope>NUCLEOTIDE SEQUENCE [LARGE SCALE GENOMIC DNA]</scope>
    <source>
        <strain>Tucson 15010-1051.87</strain>
    </source>
</reference>
<sequence length="678" mass="77199">MSTQNGMYYSLLEWFKTLNLNAPHANAEELADGVALAQALNQFAPESFTNSWLSKIKSSAVGGNWRLRMSNLKKVVEGVYEYYSDVLNYTLQHDFVKPDVQAIAEKCDLSELERLLQLVLGCAVNCAKKQSYICEIMCLEEELQANIMRALQELESSTRQTTEGGVVSSLSRNSLSGMLDGNAKALEERDAMAQKCFETEKKMLLLIDEKTNLQQELHKLQLEFARLEHNTIGDDGVSLGPIQAGSVRYNELRRQLELVKEELLQSEGAREDLKIKAQQQETDLLHMQQRIDELMKSTAELTALKDEVDVLRESTDKLKVCEAQLETYKKKLEEYNDLKKHVKMLEERSADYVQQNAQFEEDAKRYANTKGQVELFKKEIQDLHAQLDNESSKNVKLEFDNKNLESKTLALQREKDNLLKERDNLREAFDELKCGQLSTNSGSLTGTTMSRELQPPAMMDKMQRLEAENKALREGQGGQTALAQLLDDANKRCEHLREQLKTANERILSLSHASQSDDPILKENEFSKQIKQLMELNEQKTLQIEESATQNSTMQCKITQLESTLATREQELMAYEVKYRKCIERAKEVIKNIDPRIASVMEANNLEKSVDVIEEESKTKMSGMEEQLMASAFYRLGVNAQRDAVDSKLALLMGSGQTFLARQRQSAPRKPLTTMKSK</sequence>
<accession>O61493</accession>
<accession>B4LS91</accession>
<protein>
    <recommendedName>
        <fullName>Protein hook</fullName>
    </recommendedName>
</protein>
<name>HOOK_DROVI</name>
<comment type="function">
    <text evidence="2">Involved in endocytic trafficking by stabilizing organelles of the endocytic pathway. Probably acts as a cytoskeletal linker protein required to tether endosome vesicles to the cytoskeleton. Involved in modulation of endocytosis at stages required for down-regulation of membrane proteins that control synapse size. Not involved in synaptic vesicle recycling. Required in R7 cells for boss endocytosis into multivesicular bodies (MVBs). Has a role in regulating adult longevity.</text>
</comment>
<comment type="subunit">
    <text evidence="2">Homodimer. Interacts with microtubules via its N-terminus.</text>
</comment>
<comment type="subcellular location">
    <subcellularLocation>
        <location evidence="2">Cytoplasm</location>
        <location evidence="2">Cytoskeleton</location>
    </subcellularLocation>
    <subcellularLocation>
        <location evidence="2">Endosome</location>
    </subcellularLocation>
    <subcellularLocation>
        <location evidence="2">Synapse</location>
    </subcellularLocation>
    <text evidence="2">Enriched at neuromuscular synapses, in both presynaptic and postsynaptic regions.</text>
</comment>
<comment type="domain">
    <text evidence="2">The coiled coil domain mediates homodimerization.</text>
</comment>
<comment type="similarity">
    <text evidence="5">Belongs to the hook family.</text>
</comment>